<name>HBBZ_MOUSE</name>
<dbReference type="EMBL" id="X14061">
    <property type="protein sequence ID" value="CAA32221.1"/>
    <property type="molecule type" value="Genomic_DNA"/>
</dbReference>
<dbReference type="EMBL" id="J00417">
    <property type="protein sequence ID" value="AAB59638.1"/>
    <property type="molecule type" value="Genomic_DNA"/>
</dbReference>
<dbReference type="EMBL" id="AK028208">
    <property type="protein sequence ID" value="BAC25815.1"/>
    <property type="molecule type" value="mRNA"/>
</dbReference>
<dbReference type="EMBL" id="BC052008">
    <property type="protein sequence ID" value="AAH52008.1"/>
    <property type="molecule type" value="mRNA"/>
</dbReference>
<dbReference type="EMBL" id="V00724">
    <property type="protein sequence ID" value="CAA24103.1"/>
    <property type="molecule type" value="Genomic_DNA"/>
</dbReference>
<dbReference type="CCDS" id="CCDS21592.1"/>
<dbReference type="PIR" id="A02419">
    <property type="entry name" value="HBMSH1"/>
</dbReference>
<dbReference type="RefSeq" id="NP_032245.1">
    <property type="nucleotide sequence ID" value="NM_008219.3"/>
</dbReference>
<dbReference type="SMR" id="P04444"/>
<dbReference type="BioGRID" id="200222">
    <property type="interactions" value="1"/>
</dbReference>
<dbReference type="ComplexPortal" id="CPX-2938">
    <property type="entry name" value="Early embryonic hemoglobin complex"/>
</dbReference>
<dbReference type="CORUM" id="P04444"/>
<dbReference type="FunCoup" id="P04444">
    <property type="interactions" value="17"/>
</dbReference>
<dbReference type="STRING" id="10090.ENSMUSP00000064865"/>
<dbReference type="PhosphoSitePlus" id="P04444"/>
<dbReference type="jPOST" id="P04444"/>
<dbReference type="PaxDb" id="10090-ENSMUSP00000064865"/>
<dbReference type="PeptideAtlas" id="P04444"/>
<dbReference type="ProteomicsDB" id="269816"/>
<dbReference type="DNASU" id="15132"/>
<dbReference type="Ensembl" id="ENSMUST00000063957.6">
    <property type="protein sequence ID" value="ENSMUSP00000064865.5"/>
    <property type="gene ID" value="ENSMUSG00000052217.7"/>
</dbReference>
<dbReference type="GeneID" id="15132"/>
<dbReference type="KEGG" id="mmu:15132"/>
<dbReference type="UCSC" id="uc009iur.1">
    <property type="organism name" value="mouse"/>
</dbReference>
<dbReference type="AGR" id="MGI:96024"/>
<dbReference type="CTD" id="15132"/>
<dbReference type="MGI" id="MGI:96024">
    <property type="gene designation" value="Hbb-bh1"/>
</dbReference>
<dbReference type="VEuPathDB" id="HostDB:ENSMUSG00000052217"/>
<dbReference type="eggNOG" id="KOG3378">
    <property type="taxonomic scope" value="Eukaryota"/>
</dbReference>
<dbReference type="GeneTree" id="ENSGT00940000164134"/>
<dbReference type="HOGENOM" id="CLU_003827_10_0_1"/>
<dbReference type="InParanoid" id="P04444"/>
<dbReference type="OMA" id="ETAIMGN"/>
<dbReference type="OrthoDB" id="9886081at2759"/>
<dbReference type="PhylomeDB" id="P04444"/>
<dbReference type="TreeFam" id="TF333268"/>
<dbReference type="BioGRID-ORCS" id="15132">
    <property type="hits" value="0 hits in 76 CRISPR screens"/>
</dbReference>
<dbReference type="PRO" id="PR:P04444"/>
<dbReference type="Proteomes" id="UP000000589">
    <property type="component" value="Chromosome 7"/>
</dbReference>
<dbReference type="RNAct" id="P04444">
    <property type="molecule type" value="protein"/>
</dbReference>
<dbReference type="Bgee" id="ENSMUSG00000052217">
    <property type="expression patterns" value="Expressed in pharyngeal arch 2 and 98 other cell types or tissues"/>
</dbReference>
<dbReference type="ExpressionAtlas" id="P04444">
    <property type="expression patterns" value="baseline and differential"/>
</dbReference>
<dbReference type="GO" id="GO:0005833">
    <property type="term" value="C:hemoglobin complex"/>
    <property type="evidence" value="ECO:0000303"/>
    <property type="project" value="ComplexPortal"/>
</dbReference>
<dbReference type="GO" id="GO:0020037">
    <property type="term" value="F:heme binding"/>
    <property type="evidence" value="ECO:0007669"/>
    <property type="project" value="Ensembl"/>
</dbReference>
<dbReference type="GO" id="GO:0031721">
    <property type="term" value="F:hemoglobin alpha binding"/>
    <property type="evidence" value="ECO:0007669"/>
    <property type="project" value="Ensembl"/>
</dbReference>
<dbReference type="GO" id="GO:0046872">
    <property type="term" value="F:metal ion binding"/>
    <property type="evidence" value="ECO:0007669"/>
    <property type="project" value="UniProtKB-KW"/>
</dbReference>
<dbReference type="GO" id="GO:0019825">
    <property type="term" value="F:oxygen binding"/>
    <property type="evidence" value="ECO:0007669"/>
    <property type="project" value="InterPro"/>
</dbReference>
<dbReference type="GO" id="GO:0005344">
    <property type="term" value="F:oxygen carrier activity"/>
    <property type="evidence" value="ECO:0007669"/>
    <property type="project" value="UniProtKB-KW"/>
</dbReference>
<dbReference type="GO" id="GO:0044877">
    <property type="term" value="F:protein-containing complex binding"/>
    <property type="evidence" value="ECO:0007669"/>
    <property type="project" value="Ensembl"/>
</dbReference>
<dbReference type="GO" id="GO:0015670">
    <property type="term" value="P:carbon dioxide transport"/>
    <property type="evidence" value="ECO:0000303"/>
    <property type="project" value="ComplexPortal"/>
</dbReference>
<dbReference type="GO" id="GO:0000122">
    <property type="term" value="P:negative regulation of transcription by RNA polymerase II"/>
    <property type="evidence" value="ECO:0000316"/>
    <property type="project" value="MGI"/>
</dbReference>
<dbReference type="GO" id="GO:0015671">
    <property type="term" value="P:oxygen transport"/>
    <property type="evidence" value="ECO:0000303"/>
    <property type="project" value="ComplexPortal"/>
</dbReference>
<dbReference type="CDD" id="cd08925">
    <property type="entry name" value="Hb-beta-like"/>
    <property type="match status" value="1"/>
</dbReference>
<dbReference type="FunFam" id="1.10.490.10:FF:000001">
    <property type="entry name" value="Hemoglobin subunit beta"/>
    <property type="match status" value="1"/>
</dbReference>
<dbReference type="Gene3D" id="1.10.490.10">
    <property type="entry name" value="Globins"/>
    <property type="match status" value="1"/>
</dbReference>
<dbReference type="InterPro" id="IPR000971">
    <property type="entry name" value="Globin"/>
</dbReference>
<dbReference type="InterPro" id="IPR009050">
    <property type="entry name" value="Globin-like_sf"/>
</dbReference>
<dbReference type="InterPro" id="IPR012292">
    <property type="entry name" value="Globin/Proto"/>
</dbReference>
<dbReference type="InterPro" id="IPR002337">
    <property type="entry name" value="Hemoglobin_b"/>
</dbReference>
<dbReference type="InterPro" id="IPR050056">
    <property type="entry name" value="Hemoglobin_oxygen_transport"/>
</dbReference>
<dbReference type="PANTHER" id="PTHR11442">
    <property type="entry name" value="HEMOGLOBIN FAMILY MEMBER"/>
    <property type="match status" value="1"/>
</dbReference>
<dbReference type="PANTHER" id="PTHR11442:SF7">
    <property type="entry name" value="HEMOGLOBIN SUBUNIT EPSILON"/>
    <property type="match status" value="1"/>
</dbReference>
<dbReference type="Pfam" id="PF00042">
    <property type="entry name" value="Globin"/>
    <property type="match status" value="1"/>
</dbReference>
<dbReference type="PRINTS" id="PR00814">
    <property type="entry name" value="BETAHAEM"/>
</dbReference>
<dbReference type="SUPFAM" id="SSF46458">
    <property type="entry name" value="Globin-like"/>
    <property type="match status" value="1"/>
</dbReference>
<dbReference type="PROSITE" id="PS01033">
    <property type="entry name" value="GLOBIN"/>
    <property type="match status" value="1"/>
</dbReference>
<comment type="function">
    <text>This is an embryonic beta-type chain.</text>
</comment>
<comment type="subunit">
    <text>Heterotetramer of two alpha chains and two beta chains.</text>
</comment>
<comment type="tissue specificity">
    <text>Red blood cells.</text>
</comment>
<comment type="similarity">
    <text evidence="1">Belongs to the globin family.</text>
</comment>
<keyword id="KW-0349">Heme</keyword>
<keyword id="KW-0408">Iron</keyword>
<keyword id="KW-0479">Metal-binding</keyword>
<keyword id="KW-0561">Oxygen transport</keyword>
<keyword id="KW-1185">Reference proteome</keyword>
<keyword id="KW-0813">Transport</keyword>
<organism>
    <name type="scientific">Mus musculus</name>
    <name type="common">Mouse</name>
    <dbReference type="NCBI Taxonomy" id="10090"/>
    <lineage>
        <taxon>Eukaryota</taxon>
        <taxon>Metazoa</taxon>
        <taxon>Chordata</taxon>
        <taxon>Craniata</taxon>
        <taxon>Vertebrata</taxon>
        <taxon>Euteleostomi</taxon>
        <taxon>Mammalia</taxon>
        <taxon>Eutheria</taxon>
        <taxon>Euarchontoglires</taxon>
        <taxon>Glires</taxon>
        <taxon>Rodentia</taxon>
        <taxon>Myomorpha</taxon>
        <taxon>Muroidea</taxon>
        <taxon>Muridae</taxon>
        <taxon>Murinae</taxon>
        <taxon>Mus</taxon>
        <taxon>Mus</taxon>
    </lineage>
</organism>
<evidence type="ECO:0000255" key="1">
    <source>
        <dbReference type="PROSITE-ProRule" id="PRU00238"/>
    </source>
</evidence>
<feature type="chain" id="PRO_0000053023" description="Hemoglobin subunit beta-H1">
    <location>
        <begin position="1"/>
        <end position="147"/>
    </location>
</feature>
<feature type="domain" description="Globin" evidence="1">
    <location>
        <begin position="3"/>
        <end position="147"/>
    </location>
</feature>
<feature type="binding site" description="distal binding residue">
    <location>
        <position position="64"/>
    </location>
    <ligand>
        <name>heme b</name>
        <dbReference type="ChEBI" id="CHEBI:60344"/>
    </ligand>
    <ligandPart>
        <name>Fe</name>
        <dbReference type="ChEBI" id="CHEBI:18248"/>
    </ligandPart>
</feature>
<feature type="binding site" description="proximal binding residue">
    <location>
        <position position="93"/>
    </location>
    <ligand>
        <name>heme b</name>
        <dbReference type="ChEBI" id="CHEBI:60344"/>
    </ligand>
    <ligandPart>
        <name>Fe</name>
        <dbReference type="ChEBI" id="CHEBI:18248"/>
    </ligandPart>
</feature>
<reference key="1">
    <citation type="journal article" date="1989" name="J. Mol. Biol.">
        <title>Nucleotide sequence of the BALB/c mouse beta-globin complex.</title>
        <authorList>
            <person name="Shehee W.R."/>
            <person name="Loeb D.D."/>
            <person name="Adey N.B."/>
            <person name="Burton F.H."/>
            <person name="Casavant N.C."/>
            <person name="Cole P."/>
            <person name="Davies C.J."/>
            <person name="McGraw R.A."/>
            <person name="Schichman S.A."/>
            <person name="Severynse D.M."/>
            <person name="Voliva C.F."/>
            <person name="Weyter F.W."/>
            <person name="Wisely G.B."/>
            <person name="Edgell M.H."/>
            <person name="Hutchison C.A. III"/>
        </authorList>
    </citation>
    <scope>NUCLEOTIDE SEQUENCE</scope>
</reference>
<reference key="2">
    <citation type="journal article" date="1984" name="J. Biol. Chem.">
        <title>Two mouse early embryonic beta-globin gene sequences. Evolution of the nonadult beta-globins.</title>
        <authorList>
            <person name="Hill A."/>
            <person name="Hardies S.C."/>
            <person name="Phillips S.J."/>
            <person name="Davis M.G."/>
            <person name="Hutchison C.A. III"/>
            <person name="Edgell M.H."/>
        </authorList>
    </citation>
    <scope>NUCLEOTIDE SEQUENCE [GENOMIC DNA]</scope>
</reference>
<reference key="3">
    <citation type="journal article" date="2005" name="Science">
        <title>The transcriptional landscape of the mammalian genome.</title>
        <authorList>
            <person name="Carninci P."/>
            <person name="Kasukawa T."/>
            <person name="Katayama S."/>
            <person name="Gough J."/>
            <person name="Frith M.C."/>
            <person name="Maeda N."/>
            <person name="Oyama R."/>
            <person name="Ravasi T."/>
            <person name="Lenhard B."/>
            <person name="Wells C."/>
            <person name="Kodzius R."/>
            <person name="Shimokawa K."/>
            <person name="Bajic V.B."/>
            <person name="Brenner S.E."/>
            <person name="Batalov S."/>
            <person name="Forrest A.R."/>
            <person name="Zavolan M."/>
            <person name="Davis M.J."/>
            <person name="Wilming L.G."/>
            <person name="Aidinis V."/>
            <person name="Allen J.E."/>
            <person name="Ambesi-Impiombato A."/>
            <person name="Apweiler R."/>
            <person name="Aturaliya R.N."/>
            <person name="Bailey T.L."/>
            <person name="Bansal M."/>
            <person name="Baxter L."/>
            <person name="Beisel K.W."/>
            <person name="Bersano T."/>
            <person name="Bono H."/>
            <person name="Chalk A.M."/>
            <person name="Chiu K.P."/>
            <person name="Choudhary V."/>
            <person name="Christoffels A."/>
            <person name="Clutterbuck D.R."/>
            <person name="Crowe M.L."/>
            <person name="Dalla E."/>
            <person name="Dalrymple B.P."/>
            <person name="de Bono B."/>
            <person name="Della Gatta G."/>
            <person name="di Bernardo D."/>
            <person name="Down T."/>
            <person name="Engstrom P."/>
            <person name="Fagiolini M."/>
            <person name="Faulkner G."/>
            <person name="Fletcher C.F."/>
            <person name="Fukushima T."/>
            <person name="Furuno M."/>
            <person name="Futaki S."/>
            <person name="Gariboldi M."/>
            <person name="Georgii-Hemming P."/>
            <person name="Gingeras T.R."/>
            <person name="Gojobori T."/>
            <person name="Green R.E."/>
            <person name="Gustincich S."/>
            <person name="Harbers M."/>
            <person name="Hayashi Y."/>
            <person name="Hensch T.K."/>
            <person name="Hirokawa N."/>
            <person name="Hill D."/>
            <person name="Huminiecki L."/>
            <person name="Iacono M."/>
            <person name="Ikeo K."/>
            <person name="Iwama A."/>
            <person name="Ishikawa T."/>
            <person name="Jakt M."/>
            <person name="Kanapin A."/>
            <person name="Katoh M."/>
            <person name="Kawasawa Y."/>
            <person name="Kelso J."/>
            <person name="Kitamura H."/>
            <person name="Kitano H."/>
            <person name="Kollias G."/>
            <person name="Krishnan S.P."/>
            <person name="Kruger A."/>
            <person name="Kummerfeld S.K."/>
            <person name="Kurochkin I.V."/>
            <person name="Lareau L.F."/>
            <person name="Lazarevic D."/>
            <person name="Lipovich L."/>
            <person name="Liu J."/>
            <person name="Liuni S."/>
            <person name="McWilliam S."/>
            <person name="Madan Babu M."/>
            <person name="Madera M."/>
            <person name="Marchionni L."/>
            <person name="Matsuda H."/>
            <person name="Matsuzawa S."/>
            <person name="Miki H."/>
            <person name="Mignone F."/>
            <person name="Miyake S."/>
            <person name="Morris K."/>
            <person name="Mottagui-Tabar S."/>
            <person name="Mulder N."/>
            <person name="Nakano N."/>
            <person name="Nakauchi H."/>
            <person name="Ng P."/>
            <person name="Nilsson R."/>
            <person name="Nishiguchi S."/>
            <person name="Nishikawa S."/>
            <person name="Nori F."/>
            <person name="Ohara O."/>
            <person name="Okazaki Y."/>
            <person name="Orlando V."/>
            <person name="Pang K.C."/>
            <person name="Pavan W.J."/>
            <person name="Pavesi G."/>
            <person name="Pesole G."/>
            <person name="Petrovsky N."/>
            <person name="Piazza S."/>
            <person name="Reed J."/>
            <person name="Reid J.F."/>
            <person name="Ring B.Z."/>
            <person name="Ringwald M."/>
            <person name="Rost B."/>
            <person name="Ruan Y."/>
            <person name="Salzberg S.L."/>
            <person name="Sandelin A."/>
            <person name="Schneider C."/>
            <person name="Schoenbach C."/>
            <person name="Sekiguchi K."/>
            <person name="Semple C.A."/>
            <person name="Seno S."/>
            <person name="Sessa L."/>
            <person name="Sheng Y."/>
            <person name="Shibata Y."/>
            <person name="Shimada H."/>
            <person name="Shimada K."/>
            <person name="Silva D."/>
            <person name="Sinclair B."/>
            <person name="Sperling S."/>
            <person name="Stupka E."/>
            <person name="Sugiura K."/>
            <person name="Sultana R."/>
            <person name="Takenaka Y."/>
            <person name="Taki K."/>
            <person name="Tammoja K."/>
            <person name="Tan S.L."/>
            <person name="Tang S."/>
            <person name="Taylor M.S."/>
            <person name="Tegner J."/>
            <person name="Teichmann S.A."/>
            <person name="Ueda H.R."/>
            <person name="van Nimwegen E."/>
            <person name="Verardo R."/>
            <person name="Wei C.L."/>
            <person name="Yagi K."/>
            <person name="Yamanishi H."/>
            <person name="Zabarovsky E."/>
            <person name="Zhu S."/>
            <person name="Zimmer A."/>
            <person name="Hide W."/>
            <person name="Bult C."/>
            <person name="Grimmond S.M."/>
            <person name="Teasdale R.D."/>
            <person name="Liu E.T."/>
            <person name="Brusic V."/>
            <person name="Quackenbush J."/>
            <person name="Wahlestedt C."/>
            <person name="Mattick J.S."/>
            <person name="Hume D.A."/>
            <person name="Kai C."/>
            <person name="Sasaki D."/>
            <person name="Tomaru Y."/>
            <person name="Fukuda S."/>
            <person name="Kanamori-Katayama M."/>
            <person name="Suzuki M."/>
            <person name="Aoki J."/>
            <person name="Arakawa T."/>
            <person name="Iida J."/>
            <person name="Imamura K."/>
            <person name="Itoh M."/>
            <person name="Kato T."/>
            <person name="Kawaji H."/>
            <person name="Kawagashira N."/>
            <person name="Kawashima T."/>
            <person name="Kojima M."/>
            <person name="Kondo S."/>
            <person name="Konno H."/>
            <person name="Nakano K."/>
            <person name="Ninomiya N."/>
            <person name="Nishio T."/>
            <person name="Okada M."/>
            <person name="Plessy C."/>
            <person name="Shibata K."/>
            <person name="Shiraki T."/>
            <person name="Suzuki S."/>
            <person name="Tagami M."/>
            <person name="Waki K."/>
            <person name="Watahiki A."/>
            <person name="Okamura-Oho Y."/>
            <person name="Suzuki H."/>
            <person name="Kawai J."/>
            <person name="Hayashizaki Y."/>
        </authorList>
    </citation>
    <scope>NUCLEOTIDE SEQUENCE [LARGE SCALE MRNA]</scope>
    <source>
        <strain>C57BL/6J</strain>
    </source>
</reference>
<reference key="4">
    <citation type="journal article" date="2004" name="Genome Res.">
        <title>The status, quality, and expansion of the NIH full-length cDNA project: the Mammalian Gene Collection (MGC).</title>
        <authorList>
            <consortium name="The MGC Project Team"/>
        </authorList>
    </citation>
    <scope>NUCLEOTIDE SEQUENCE [LARGE SCALE MRNA]</scope>
    <source>
        <strain>C57BL/6J</strain>
        <tissue>Brain</tissue>
    </source>
</reference>
<reference key="5">
    <citation type="journal article" date="1980" name="Cell">
        <title>DNA sequence organization of the beta-globin complex in the BALB/c mouse.</title>
        <authorList>
            <person name="Jahn C.L."/>
            <person name="Hutchison C.A. III"/>
            <person name="Phillips S.J."/>
            <person name="Weaver S."/>
            <person name="Haigwood N.L."/>
            <person name="Voliva C.F."/>
            <person name="Edgell M.H."/>
        </authorList>
    </citation>
    <scope>NUCLEOTIDE SEQUENCE [GENOMIC DNA] OF 60-105</scope>
</reference>
<sequence length="147" mass="16494">MVHFTAEEKAAITSIWDKVDLEKVGGETLGRLLIVYPWTQRFFDKFGNLSSALAIMGNPRIRAHGKKVLTSLGLGVKNMDNLKETFAHLSELHCDKLHVDPENFKLLGNMLVIVLSTHFAKEFTPEVQAAWQKLVIGVANALSHKYH</sequence>
<protein>
    <recommendedName>
        <fullName>Hemoglobin subunit beta-H1</fullName>
    </recommendedName>
    <alternativeName>
        <fullName>Beta-H1-globin</fullName>
    </alternativeName>
    <alternativeName>
        <fullName>Hemoglobin beta-H1 chain</fullName>
    </alternativeName>
    <alternativeName>
        <fullName>Protein Z</fullName>
    </alternativeName>
</protein>
<accession>P04444</accession>
<accession>Q61347</accession>
<proteinExistence type="evidence at transcript level"/>
<gene>
    <name type="primary">Hbb-bh1</name>
</gene>